<evidence type="ECO:0000250" key="1"/>
<evidence type="ECO:0000250" key="2">
    <source>
        <dbReference type="UniProtKB" id="P02771"/>
    </source>
</evidence>
<evidence type="ECO:0000255" key="3"/>
<evidence type="ECO:0000255" key="4">
    <source>
        <dbReference type="PROSITE-ProRule" id="PRU00769"/>
    </source>
</evidence>
<sequence length="609" mass="68742">MKWVESIFLIFLLNFTESRTLHRNEYGIASILDSYQCTAEINLTDLATIFFAQFVQEATYKEVSKMVKDALTAIEKPTGDEQSAGCLENQLPAFLEELCREKEILEKYGHSDCCSQSEEGRHNCFLAHKKPTPASIPFFQVPEPVTSCEAYEEDRETFMNKFIYEIARRHPFLYAPTILLWAARYDKIIPSCCKAENAVECFQTKAATVTKELRESSLLNQHACAVMKNFGTRTFQAITVTKLSQKFTKVNFTEIQKLVLDVAHVHEHCCRGDVLDCLQDGEKIMSYICSQQDTLSNKITECCKLTTLERGQCIIHAENDEKPEGLSPNLNRFLGDRDFNQFSSGEKNIFLASFVHEYSRRHPQLAVSVILRVAKGYQELLEKCFQTENPLECQDKGEEELQKYIQESQALAKRSCGLFQKLGEYYLQNAFLVAYTKKAPQLTSSELMAITRKMAATAATCCQLSEDKLLACGEGAADIIIGHLCIRHETTPVNPGVGQCCTSSYANRRPCFSSLVVDETYVPPAFSDDKFIFHKDLCQAQGVALQTMKQEFLINLVKQKPQITEEQLEAVIADFSGLLEKCCQGQEQEVCFAEEGQKLISKTRAALGV</sequence>
<comment type="function">
    <text>Binds copper, nickel, and fatty acids as well as, and bilirubin less well than, serum albumin.</text>
</comment>
<comment type="subunit">
    <text evidence="1">Dimeric and trimeric forms have been found in addition to the monomeric form.</text>
</comment>
<comment type="subcellular location">
    <subcellularLocation>
        <location>Secreted</location>
    </subcellularLocation>
</comment>
<comment type="tissue specificity">
    <text>Plasma. Synthesized by the fetal liver and yolk sac.</text>
</comment>
<comment type="similarity">
    <text evidence="4">Belongs to the ALB/AFP/VDB family.</text>
</comment>
<protein>
    <recommendedName>
        <fullName>Alpha-fetoprotein</fullName>
    </recommendedName>
    <alternativeName>
        <fullName>Alpha-1-fetoprotein</fullName>
    </alternativeName>
    <alternativeName>
        <fullName>Alpha-fetoglobulin</fullName>
    </alternativeName>
</protein>
<gene>
    <name type="primary">AFP</name>
</gene>
<feature type="signal peptide" evidence="1">
    <location>
        <begin position="1"/>
        <end position="18"/>
    </location>
</feature>
<feature type="chain" id="PRO_0000001099" description="Alpha-fetoprotein">
    <location>
        <begin position="19"/>
        <end position="609"/>
    </location>
</feature>
<feature type="domain" description="Albumin 1" evidence="4">
    <location>
        <begin position="19"/>
        <end position="210"/>
    </location>
</feature>
<feature type="domain" description="Albumin 2" evidence="4">
    <location>
        <begin position="211"/>
        <end position="402"/>
    </location>
</feature>
<feature type="domain" description="Albumin 3" evidence="4">
    <location>
        <begin position="403"/>
        <end position="601"/>
    </location>
</feature>
<feature type="binding site" evidence="1">
    <location>
        <position position="22"/>
    </location>
    <ligand>
        <name>Cu(2+)</name>
        <dbReference type="ChEBI" id="CHEBI:29036"/>
    </ligand>
</feature>
<feature type="modified residue" description="Phosphoserine" evidence="2">
    <location>
        <position position="111"/>
    </location>
</feature>
<feature type="modified residue" description="Phosphoserine" evidence="2">
    <location>
        <position position="115"/>
    </location>
</feature>
<feature type="modified residue" description="Phosphoserine" evidence="2">
    <location>
        <position position="117"/>
    </location>
</feature>
<feature type="modified residue" description="Phosphoserine" evidence="2">
    <location>
        <position position="344"/>
    </location>
</feature>
<feature type="modified residue" description="Phosphoserine" evidence="2">
    <location>
        <position position="444"/>
    </location>
</feature>
<feature type="glycosylation site" description="N-linked (GlcNAc...) asparagine" evidence="3">
    <location>
        <position position="42"/>
    </location>
</feature>
<feature type="glycosylation site" description="N-linked (GlcNAc...) asparagine" evidence="3">
    <location>
        <position position="251"/>
    </location>
</feature>
<feature type="disulfide bond" evidence="4">
    <location>
        <begin position="99"/>
        <end position="114"/>
    </location>
</feature>
<feature type="disulfide bond" evidence="4">
    <location>
        <begin position="113"/>
        <end position="124"/>
    </location>
</feature>
<feature type="disulfide bond" evidence="4">
    <location>
        <begin position="148"/>
        <end position="193"/>
    </location>
</feature>
<feature type="disulfide bond" evidence="4">
    <location>
        <begin position="192"/>
        <end position="201"/>
    </location>
</feature>
<feature type="disulfide bond" evidence="4">
    <location>
        <begin position="224"/>
        <end position="270"/>
    </location>
</feature>
<feature type="disulfide bond" evidence="4">
    <location>
        <begin position="269"/>
        <end position="277"/>
    </location>
</feature>
<feature type="disulfide bond" evidence="4">
    <location>
        <begin position="289"/>
        <end position="303"/>
    </location>
</feature>
<feature type="disulfide bond" evidence="4">
    <location>
        <begin position="302"/>
        <end position="313"/>
    </location>
</feature>
<feature type="disulfide bond" evidence="4">
    <location>
        <begin position="384"/>
        <end position="393"/>
    </location>
</feature>
<feature type="disulfide bond" evidence="4">
    <location>
        <begin position="416"/>
        <end position="462"/>
    </location>
</feature>
<feature type="disulfide bond" evidence="4">
    <location>
        <begin position="461"/>
        <end position="472"/>
    </location>
</feature>
<feature type="disulfide bond" evidence="4">
    <location>
        <begin position="485"/>
        <end position="501"/>
    </location>
</feature>
<feature type="disulfide bond" evidence="4">
    <location>
        <begin position="500"/>
        <end position="511"/>
    </location>
</feature>
<feature type="disulfide bond" evidence="4">
    <location>
        <begin position="538"/>
        <end position="583"/>
    </location>
</feature>
<feature type="disulfide bond" evidence="4">
    <location>
        <begin position="582"/>
        <end position="591"/>
    </location>
</feature>
<keyword id="KW-0186">Copper</keyword>
<keyword id="KW-1015">Disulfide bond</keyword>
<keyword id="KW-0325">Glycoprotein</keyword>
<keyword id="KW-0479">Metal-binding</keyword>
<keyword id="KW-0533">Nickel</keyword>
<keyword id="KW-0597">Phosphoprotein</keyword>
<keyword id="KW-1185">Reference proteome</keyword>
<keyword id="KW-0677">Repeat</keyword>
<keyword id="KW-0964">Secreted</keyword>
<keyword id="KW-0732">Signal</keyword>
<keyword id="KW-0765">Sulfation</keyword>
<accession>Q28789</accession>
<organism>
    <name type="scientific">Pan troglodytes</name>
    <name type="common">Chimpanzee</name>
    <dbReference type="NCBI Taxonomy" id="9598"/>
    <lineage>
        <taxon>Eukaryota</taxon>
        <taxon>Metazoa</taxon>
        <taxon>Chordata</taxon>
        <taxon>Craniata</taxon>
        <taxon>Vertebrata</taxon>
        <taxon>Euteleostomi</taxon>
        <taxon>Mammalia</taxon>
        <taxon>Eutheria</taxon>
        <taxon>Euarchontoglires</taxon>
        <taxon>Primates</taxon>
        <taxon>Haplorrhini</taxon>
        <taxon>Catarrhini</taxon>
        <taxon>Hominidae</taxon>
        <taxon>Pan</taxon>
    </lineage>
</organism>
<dbReference type="EMBL" id="U21916">
    <property type="protein sequence ID" value="AAA91641.1"/>
    <property type="molecule type" value="Genomic_DNA"/>
</dbReference>
<dbReference type="PIR" id="JC4258">
    <property type="entry name" value="JC4258"/>
</dbReference>
<dbReference type="SMR" id="Q28789"/>
<dbReference type="FunCoup" id="Q28789">
    <property type="interactions" value="252"/>
</dbReference>
<dbReference type="STRING" id="9598.ENSPTRP00000027765"/>
<dbReference type="GlyCosmos" id="Q28789">
    <property type="glycosylation" value="2 sites, No reported glycans"/>
</dbReference>
<dbReference type="PaxDb" id="9598-ENSPTRP00000027765"/>
<dbReference type="eggNOG" id="ENOG502R7EA">
    <property type="taxonomic scope" value="Eukaryota"/>
</dbReference>
<dbReference type="InParanoid" id="Q28789"/>
<dbReference type="Proteomes" id="UP000002277">
    <property type="component" value="Unplaced"/>
</dbReference>
<dbReference type="GO" id="GO:0005737">
    <property type="term" value="C:cytoplasm"/>
    <property type="evidence" value="ECO:0000318"/>
    <property type="project" value="GO_Central"/>
</dbReference>
<dbReference type="GO" id="GO:0005615">
    <property type="term" value="C:extracellular space"/>
    <property type="evidence" value="ECO:0007669"/>
    <property type="project" value="InterPro"/>
</dbReference>
<dbReference type="GO" id="GO:0046872">
    <property type="term" value="F:metal ion binding"/>
    <property type="evidence" value="ECO:0007669"/>
    <property type="project" value="UniProtKB-KW"/>
</dbReference>
<dbReference type="CDD" id="cd00015">
    <property type="entry name" value="ALBUMIN"/>
    <property type="match status" value="3"/>
</dbReference>
<dbReference type="FunFam" id="1.10.246.10:FF:000001">
    <property type="entry name" value="Serum albumin"/>
    <property type="match status" value="3"/>
</dbReference>
<dbReference type="FunFam" id="1.10.246.10:FF:000002">
    <property type="entry name" value="Serum albumin"/>
    <property type="match status" value="2"/>
</dbReference>
<dbReference type="FunFam" id="1.10.246.10:FF:000004">
    <property type="entry name" value="Serum albumin"/>
    <property type="match status" value="1"/>
</dbReference>
<dbReference type="Gene3D" id="1.10.246.10">
    <property type="match status" value="6"/>
</dbReference>
<dbReference type="InterPro" id="IPR000264">
    <property type="entry name" value="ALB/AFP/VDB"/>
</dbReference>
<dbReference type="InterPro" id="IPR020858">
    <property type="entry name" value="Serum_albumin-like"/>
</dbReference>
<dbReference type="InterPro" id="IPR021177">
    <property type="entry name" value="Serum_albumin/AFP/Afamin"/>
</dbReference>
<dbReference type="InterPro" id="IPR020857">
    <property type="entry name" value="Serum_albumin_CS"/>
</dbReference>
<dbReference type="InterPro" id="IPR014760">
    <property type="entry name" value="Serum_albumin_N"/>
</dbReference>
<dbReference type="PANTHER" id="PTHR11385:SF7">
    <property type="entry name" value="ALPHA-FETOPROTEIN"/>
    <property type="match status" value="1"/>
</dbReference>
<dbReference type="PANTHER" id="PTHR11385">
    <property type="entry name" value="SERUM ALBUMIN-RELATED"/>
    <property type="match status" value="1"/>
</dbReference>
<dbReference type="Pfam" id="PF00273">
    <property type="entry name" value="Serum_albumin"/>
    <property type="match status" value="3"/>
</dbReference>
<dbReference type="PIRSF" id="PIRSF002520">
    <property type="entry name" value="Serum_albumin_subgroup"/>
    <property type="match status" value="1"/>
</dbReference>
<dbReference type="PRINTS" id="PR00803">
    <property type="entry name" value="AFETOPROTEIN"/>
</dbReference>
<dbReference type="PRINTS" id="PR00802">
    <property type="entry name" value="SERUMALBUMIN"/>
</dbReference>
<dbReference type="SMART" id="SM00103">
    <property type="entry name" value="ALBUMIN"/>
    <property type="match status" value="3"/>
</dbReference>
<dbReference type="SUPFAM" id="SSF48552">
    <property type="entry name" value="Serum albumin-like"/>
    <property type="match status" value="3"/>
</dbReference>
<dbReference type="PROSITE" id="PS00212">
    <property type="entry name" value="ALBUMIN_1"/>
    <property type="match status" value="2"/>
</dbReference>
<dbReference type="PROSITE" id="PS51438">
    <property type="entry name" value="ALBUMIN_2"/>
    <property type="match status" value="3"/>
</dbReference>
<reference key="1">
    <citation type="journal article" date="1995" name="Gene">
        <title>The chimpanzee alpha-fetoprotein-encoding gene shows structural similarity to that of gorilla but distinct differences from that of human.</title>
        <authorList>
            <person name="Nishio H."/>
            <person name="Gibbs P.E."/>
            <person name="Minghetti P.P."/>
            <person name="Zielinski R."/>
            <person name="Dugaiczyk A."/>
        </authorList>
    </citation>
    <scope>NUCLEOTIDE SEQUENCE [GENOMIC DNA]</scope>
</reference>
<name>FETA_PANTR</name>
<proteinExistence type="evidence at transcript level"/>